<proteinExistence type="inferred from homology"/>
<comment type="function">
    <text evidence="1">Involved in the regulation of the TOR signaling pathway. Seems to act as a regulator of PP2A catalytic activity.</text>
</comment>
<comment type="disruption phenotype">
    <text evidence="3">RNAi plants show severe growth retardation, the formation of spontaneous disease-like nectrotic lesions leading to premature cell death. The defective plants also display a strong reduction in protein synthesis, and chromatin bridge formation at anaphase.</text>
</comment>
<comment type="similarity">
    <text evidence="5">Belongs to the IGBP1/TAP42 family.</text>
</comment>
<evidence type="ECO:0000250" key="1">
    <source>
        <dbReference type="UniProtKB" id="D2K8N5"/>
    </source>
</evidence>
<evidence type="ECO:0000256" key="2">
    <source>
        <dbReference type="SAM" id="MobiDB-lite"/>
    </source>
</evidence>
<evidence type="ECO:0000269" key="3">
    <source>
    </source>
</evidence>
<evidence type="ECO:0000303" key="4">
    <source>
    </source>
</evidence>
<evidence type="ECO:0000305" key="5"/>
<organism>
    <name type="scientific">Nicotiana tabacum</name>
    <name type="common">Common tobacco</name>
    <dbReference type="NCBI Taxonomy" id="4097"/>
    <lineage>
        <taxon>Eukaryota</taxon>
        <taxon>Viridiplantae</taxon>
        <taxon>Streptophyta</taxon>
        <taxon>Embryophyta</taxon>
        <taxon>Tracheophyta</taxon>
        <taxon>Spermatophyta</taxon>
        <taxon>Magnoliopsida</taxon>
        <taxon>eudicotyledons</taxon>
        <taxon>Gunneridae</taxon>
        <taxon>Pentapetalae</taxon>
        <taxon>asterids</taxon>
        <taxon>lamiids</taxon>
        <taxon>Solanales</taxon>
        <taxon>Solanaceae</taxon>
        <taxon>Nicotianoideae</taxon>
        <taxon>Nicotianeae</taxon>
        <taxon>Nicotiana</taxon>
    </lineage>
</organism>
<name>TAP46_TOBAC</name>
<keyword id="KW-1185">Reference proteome</keyword>
<sequence length="403" mass="45568">MGELSMQEMPLPALFEQGSKIHASAESSVDQDTVRKGCEILRQCEEMIGKLGLFSVNETKEDISTANLKYILVPYYLAELTEKVADNDRIKVLKASQAKLKEFISFCETMELVPEEEIETSTQGGANSSVDRRAKKIARFKRQRAAESKLLEIKERKERRGRSTKAAALSSPVETEEDDVLDDDGEEEREAWLTTISLGLCKAFDLLEMLKKEEEILSAVKEKQLQDGEREFSQAILDERTKKVETWHRDAAARAHHTKPAAPITCATFAQDVIEGRAKVSQAHEHKHQPLIFGPASLVGRNPTTEREKIAAQVFQPHYRLPTMSIEEAGLTEMNMMNEWQERNVKLMEEANSSWYKDTPKSRPGEDDEEDDDDAAQDKARAWDDWKDDNPRGAGNKKLTPCG</sequence>
<protein>
    <recommendedName>
        <fullName evidence="4">PP2A regulatory subunit TAP46</fullName>
    </recommendedName>
</protein>
<accession>A0A1S4D1D3</accession>
<reference key="1">
    <citation type="journal article" date="2011" name="Plant Cell">
        <title>The PP2A regulatory subunit Tap46, a component of the TOR signaling pathway, modulates growth and metabolism in plants.</title>
        <authorList>
            <person name="Ahn C.S."/>
            <person name="Han J.-A."/>
            <person name="Lee H.-S."/>
            <person name="Lee S."/>
            <person name="Pai H.-S."/>
        </authorList>
    </citation>
    <scope>IDENTIFICATION</scope>
    <scope>DISRUPTION PHENOTYPE</scope>
</reference>
<reference key="2">
    <citation type="journal article" date="2011" name="Plant Signal. Behav.">
        <title>Molecular functions of the PP2A regulatory subunit Tap46 in plants.</title>
        <authorList>
            <person name="Ahn C.S."/>
            <person name="Lee H.S."/>
            <person name="Pai H.S."/>
        </authorList>
    </citation>
    <scope>ADDENDUM</scope>
</reference>
<gene>
    <name evidence="4" type="primary">TAP46</name>
</gene>
<feature type="chain" id="PRO_0000440568" description="PP2A regulatory subunit TAP46">
    <location>
        <begin position="1"/>
        <end position="403"/>
    </location>
</feature>
<feature type="region of interest" description="Disordered" evidence="2">
    <location>
        <begin position="158"/>
        <end position="184"/>
    </location>
</feature>
<feature type="region of interest" description="Disordered" evidence="2">
    <location>
        <begin position="351"/>
        <end position="403"/>
    </location>
</feature>
<feature type="compositionally biased region" description="Acidic residues" evidence="2">
    <location>
        <begin position="174"/>
        <end position="184"/>
    </location>
</feature>
<feature type="compositionally biased region" description="Acidic residues" evidence="2">
    <location>
        <begin position="366"/>
        <end position="375"/>
    </location>
</feature>
<feature type="compositionally biased region" description="Basic and acidic residues" evidence="2">
    <location>
        <begin position="376"/>
        <end position="391"/>
    </location>
</feature>
<dbReference type="RefSeq" id="XP_016507074.1">
    <property type="nucleotide sequence ID" value="XM_016651588.1"/>
</dbReference>
<dbReference type="SMR" id="A0A1S4D1D3"/>
<dbReference type="STRING" id="4097.A0A1S4D1D3"/>
<dbReference type="PaxDb" id="4097-A0A1S4D1D3"/>
<dbReference type="KEGG" id="nta:107824781"/>
<dbReference type="OMA" id="CESKMED"/>
<dbReference type="OrthoDB" id="10261753at2759"/>
<dbReference type="Proteomes" id="UP000084051">
    <property type="component" value="Unplaced"/>
</dbReference>
<dbReference type="GO" id="GO:0005829">
    <property type="term" value="C:cytosol"/>
    <property type="evidence" value="ECO:0000318"/>
    <property type="project" value="GO_Central"/>
</dbReference>
<dbReference type="GO" id="GO:0051721">
    <property type="term" value="F:protein phosphatase 2A binding"/>
    <property type="evidence" value="ECO:0000318"/>
    <property type="project" value="GO_Central"/>
</dbReference>
<dbReference type="GO" id="GO:0035303">
    <property type="term" value="P:regulation of dephosphorylation"/>
    <property type="evidence" value="ECO:0000318"/>
    <property type="project" value="GO_Central"/>
</dbReference>
<dbReference type="GO" id="GO:0009966">
    <property type="term" value="P:regulation of signal transduction"/>
    <property type="evidence" value="ECO:0007669"/>
    <property type="project" value="InterPro"/>
</dbReference>
<dbReference type="FunFam" id="1.25.40.540:FF:000002">
    <property type="entry name" value="PP2A regulatory subunit TAP46"/>
    <property type="match status" value="1"/>
</dbReference>
<dbReference type="Gene3D" id="1.25.40.540">
    <property type="entry name" value="TAP42-like family"/>
    <property type="match status" value="1"/>
</dbReference>
<dbReference type="InterPro" id="IPR038511">
    <property type="entry name" value="TAP42/TAP46-like_sf"/>
</dbReference>
<dbReference type="InterPro" id="IPR007304">
    <property type="entry name" value="TAP46-like"/>
</dbReference>
<dbReference type="PANTHER" id="PTHR10933">
    <property type="entry name" value="IMMUNOGLOBULIN-BINDING PROTEIN 1"/>
    <property type="match status" value="1"/>
</dbReference>
<dbReference type="PANTHER" id="PTHR10933:SF16">
    <property type="entry name" value="PP2A REGULATORY SUBUNIT TAP46"/>
    <property type="match status" value="1"/>
</dbReference>
<dbReference type="Pfam" id="PF04177">
    <property type="entry name" value="TAP42"/>
    <property type="match status" value="1"/>
</dbReference>